<evidence type="ECO:0000255" key="1">
    <source>
        <dbReference type="HAMAP-Rule" id="MF_00531"/>
    </source>
</evidence>
<evidence type="ECO:0000305" key="2"/>
<keyword id="KW-0687">Ribonucleoprotein</keyword>
<keyword id="KW-0689">Ribosomal protein</keyword>
<keyword id="KW-0694">RNA-binding</keyword>
<keyword id="KW-0699">rRNA-binding</keyword>
<comment type="function">
    <text evidence="1">Protein S19 forms a complex with S13 that binds strongly to the 16S ribosomal RNA.</text>
</comment>
<comment type="similarity">
    <text evidence="1">Belongs to the universal ribosomal protein uS19 family.</text>
</comment>
<gene>
    <name evidence="1" type="primary">rpsS</name>
    <name type="ordered locus">RAF_ORF0908</name>
</gene>
<name>RS19_RICAE</name>
<feature type="chain" id="PRO_1000211817" description="Small ribosomal subunit protein uS19">
    <location>
        <begin position="1"/>
        <end position="92"/>
    </location>
</feature>
<organism>
    <name type="scientific">Rickettsia africae (strain ESF-5)</name>
    <dbReference type="NCBI Taxonomy" id="347255"/>
    <lineage>
        <taxon>Bacteria</taxon>
        <taxon>Pseudomonadati</taxon>
        <taxon>Pseudomonadota</taxon>
        <taxon>Alphaproteobacteria</taxon>
        <taxon>Rickettsiales</taxon>
        <taxon>Rickettsiaceae</taxon>
        <taxon>Rickettsieae</taxon>
        <taxon>Rickettsia</taxon>
        <taxon>spotted fever group</taxon>
    </lineage>
</organism>
<accession>C3PPA3</accession>
<sequence length="92" mass="10510">MARSIWKGPFVDGYLIKKVQKLMESGKSEMIKTWSRRSTILPIFVGFTFSVHNGNKFIPVSVNEEMVGRKLGEFAPTRTFHGHGADKKIKRK</sequence>
<dbReference type="EMBL" id="CP001612">
    <property type="protein sequence ID" value="ACP53763.1"/>
    <property type="molecule type" value="Genomic_DNA"/>
</dbReference>
<dbReference type="RefSeq" id="WP_004997794.1">
    <property type="nucleotide sequence ID" value="NC_012633.1"/>
</dbReference>
<dbReference type="SMR" id="C3PPA3"/>
<dbReference type="GeneID" id="95361482"/>
<dbReference type="KEGG" id="raf:RAF_ORF0908"/>
<dbReference type="HOGENOM" id="CLU_144911_0_1_5"/>
<dbReference type="Proteomes" id="UP000002305">
    <property type="component" value="Chromosome"/>
</dbReference>
<dbReference type="GO" id="GO:0005737">
    <property type="term" value="C:cytoplasm"/>
    <property type="evidence" value="ECO:0007669"/>
    <property type="project" value="UniProtKB-ARBA"/>
</dbReference>
<dbReference type="GO" id="GO:0015935">
    <property type="term" value="C:small ribosomal subunit"/>
    <property type="evidence" value="ECO:0007669"/>
    <property type="project" value="InterPro"/>
</dbReference>
<dbReference type="GO" id="GO:0019843">
    <property type="term" value="F:rRNA binding"/>
    <property type="evidence" value="ECO:0007669"/>
    <property type="project" value="UniProtKB-UniRule"/>
</dbReference>
<dbReference type="GO" id="GO:0003735">
    <property type="term" value="F:structural constituent of ribosome"/>
    <property type="evidence" value="ECO:0007669"/>
    <property type="project" value="InterPro"/>
</dbReference>
<dbReference type="GO" id="GO:0000028">
    <property type="term" value="P:ribosomal small subunit assembly"/>
    <property type="evidence" value="ECO:0007669"/>
    <property type="project" value="TreeGrafter"/>
</dbReference>
<dbReference type="GO" id="GO:0006412">
    <property type="term" value="P:translation"/>
    <property type="evidence" value="ECO:0007669"/>
    <property type="project" value="UniProtKB-UniRule"/>
</dbReference>
<dbReference type="FunFam" id="3.30.860.10:FF:000001">
    <property type="entry name" value="30S ribosomal protein S19"/>
    <property type="match status" value="1"/>
</dbReference>
<dbReference type="Gene3D" id="3.30.860.10">
    <property type="entry name" value="30s Ribosomal Protein S19, Chain A"/>
    <property type="match status" value="1"/>
</dbReference>
<dbReference type="HAMAP" id="MF_00531">
    <property type="entry name" value="Ribosomal_uS19"/>
    <property type="match status" value="1"/>
</dbReference>
<dbReference type="InterPro" id="IPR002222">
    <property type="entry name" value="Ribosomal_uS19"/>
</dbReference>
<dbReference type="InterPro" id="IPR005732">
    <property type="entry name" value="Ribosomal_uS19_bac-type"/>
</dbReference>
<dbReference type="InterPro" id="IPR020934">
    <property type="entry name" value="Ribosomal_uS19_CS"/>
</dbReference>
<dbReference type="InterPro" id="IPR023575">
    <property type="entry name" value="Ribosomal_uS19_SF"/>
</dbReference>
<dbReference type="NCBIfam" id="TIGR01050">
    <property type="entry name" value="rpsS_bact"/>
    <property type="match status" value="1"/>
</dbReference>
<dbReference type="PANTHER" id="PTHR11880">
    <property type="entry name" value="RIBOSOMAL PROTEIN S19P FAMILY MEMBER"/>
    <property type="match status" value="1"/>
</dbReference>
<dbReference type="PANTHER" id="PTHR11880:SF8">
    <property type="entry name" value="SMALL RIBOSOMAL SUBUNIT PROTEIN US19M"/>
    <property type="match status" value="1"/>
</dbReference>
<dbReference type="Pfam" id="PF00203">
    <property type="entry name" value="Ribosomal_S19"/>
    <property type="match status" value="1"/>
</dbReference>
<dbReference type="PIRSF" id="PIRSF002144">
    <property type="entry name" value="Ribosomal_S19"/>
    <property type="match status" value="1"/>
</dbReference>
<dbReference type="PRINTS" id="PR00975">
    <property type="entry name" value="RIBOSOMALS19"/>
</dbReference>
<dbReference type="SUPFAM" id="SSF54570">
    <property type="entry name" value="Ribosomal protein S19"/>
    <property type="match status" value="1"/>
</dbReference>
<dbReference type="PROSITE" id="PS00323">
    <property type="entry name" value="RIBOSOMAL_S19"/>
    <property type="match status" value="1"/>
</dbReference>
<reference key="1">
    <citation type="journal article" date="2009" name="BMC Genomics">
        <title>Analysis of the Rickettsia africae genome reveals that virulence acquisition in Rickettsia species may be explained by genome reduction.</title>
        <authorList>
            <person name="Fournier P.-E."/>
            <person name="El Karkouri K."/>
            <person name="Leroy Q."/>
            <person name="Robert C."/>
            <person name="Giumelli B."/>
            <person name="Renesto P."/>
            <person name="Socolovschi C."/>
            <person name="Parola P."/>
            <person name="Audic S."/>
            <person name="Raoult D."/>
        </authorList>
    </citation>
    <scope>NUCLEOTIDE SEQUENCE [LARGE SCALE GENOMIC DNA]</scope>
    <source>
        <strain>ESF-5</strain>
    </source>
</reference>
<protein>
    <recommendedName>
        <fullName evidence="1">Small ribosomal subunit protein uS19</fullName>
    </recommendedName>
    <alternativeName>
        <fullName evidence="2">30S ribosomal protein S19</fullName>
    </alternativeName>
</protein>
<proteinExistence type="inferred from homology"/>